<proteinExistence type="evidence at transcript level"/>
<organism>
    <name type="scientific">Homo sapiens</name>
    <name type="common">Human</name>
    <dbReference type="NCBI Taxonomy" id="9606"/>
    <lineage>
        <taxon>Eukaryota</taxon>
        <taxon>Metazoa</taxon>
        <taxon>Chordata</taxon>
        <taxon>Craniata</taxon>
        <taxon>Vertebrata</taxon>
        <taxon>Euteleostomi</taxon>
        <taxon>Mammalia</taxon>
        <taxon>Eutheria</taxon>
        <taxon>Euarchontoglires</taxon>
        <taxon>Primates</taxon>
        <taxon>Haplorrhini</taxon>
        <taxon>Catarrhini</taxon>
        <taxon>Hominidae</taxon>
        <taxon>Homo</taxon>
    </lineage>
</organism>
<comment type="subcellular location">
    <subcellularLocation>
        <location evidence="3">Secreted</location>
    </subcellularLocation>
</comment>
<gene>
    <name type="ORF">UNQ9165/PRO28630</name>
</gene>
<feature type="signal peptide" evidence="1">
    <location>
        <begin position="1"/>
        <end position="34"/>
    </location>
</feature>
<feature type="chain" id="PRO_0000317736" description="Putative uncharacterized protein UNQ9165/PRO28630">
    <location>
        <begin position="35"/>
        <end position="137"/>
    </location>
</feature>
<feature type="region of interest" description="Disordered" evidence="2">
    <location>
        <begin position="33"/>
        <end position="54"/>
    </location>
</feature>
<feature type="region of interest" description="Disordered" evidence="2">
    <location>
        <begin position="98"/>
        <end position="137"/>
    </location>
</feature>
<feature type="compositionally biased region" description="Polar residues" evidence="2">
    <location>
        <begin position="33"/>
        <end position="45"/>
    </location>
</feature>
<feature type="compositionally biased region" description="Basic and acidic residues" evidence="2">
    <location>
        <begin position="121"/>
        <end position="137"/>
    </location>
</feature>
<feature type="glycosylation site" description="N-linked (GlcNAc...) asparagine" evidence="1">
    <location>
        <position position="40"/>
    </location>
</feature>
<accession>Q6UXU0</accession>
<keyword id="KW-0325">Glycoprotein</keyword>
<keyword id="KW-1185">Reference proteome</keyword>
<keyword id="KW-0964">Secreted</keyword>
<keyword id="KW-0732">Signal</keyword>
<dbReference type="EMBL" id="AY358211">
    <property type="protein sequence ID" value="AAQ88578.1"/>
    <property type="molecule type" value="mRNA"/>
</dbReference>
<dbReference type="GlyGen" id="Q6UXU0">
    <property type="glycosylation" value="1 site, 1 N-linked glycan (1 site)"/>
</dbReference>
<dbReference type="BioMuta" id="UNQ9165/PRO28630"/>
<dbReference type="DMDM" id="74738270"/>
<dbReference type="neXtProt" id="NX_Q6UXU0"/>
<dbReference type="InParanoid" id="Q6UXU0"/>
<dbReference type="PAN-GO" id="Q6UXU0">
    <property type="GO annotations" value="0 GO annotations based on evolutionary models"/>
</dbReference>
<dbReference type="PhylomeDB" id="Q6UXU0"/>
<dbReference type="Pharos" id="Q6UXU0">
    <property type="development level" value="Tdark"/>
</dbReference>
<dbReference type="Proteomes" id="UP000005640">
    <property type="component" value="Unplaced"/>
</dbReference>
<dbReference type="RNAct" id="Q6UXU0">
    <property type="molecule type" value="protein"/>
</dbReference>
<dbReference type="GO" id="GO:0005576">
    <property type="term" value="C:extracellular region"/>
    <property type="evidence" value="ECO:0007669"/>
    <property type="project" value="UniProtKB-SubCell"/>
</dbReference>
<reference key="1">
    <citation type="journal article" date="2003" name="Genome Res.">
        <title>The secreted protein discovery initiative (SPDI), a large-scale effort to identify novel human secreted and transmembrane proteins: a bioinformatics assessment.</title>
        <authorList>
            <person name="Clark H.F."/>
            <person name="Gurney A.L."/>
            <person name="Abaya E."/>
            <person name="Baker K."/>
            <person name="Baldwin D.T."/>
            <person name="Brush J."/>
            <person name="Chen J."/>
            <person name="Chow B."/>
            <person name="Chui C."/>
            <person name="Crowley C."/>
            <person name="Currell B."/>
            <person name="Deuel B."/>
            <person name="Dowd P."/>
            <person name="Eaton D."/>
            <person name="Foster J.S."/>
            <person name="Grimaldi C."/>
            <person name="Gu Q."/>
            <person name="Hass P.E."/>
            <person name="Heldens S."/>
            <person name="Huang A."/>
            <person name="Kim H.S."/>
            <person name="Klimowski L."/>
            <person name="Jin Y."/>
            <person name="Johnson S."/>
            <person name="Lee J."/>
            <person name="Lewis L."/>
            <person name="Liao D."/>
            <person name="Mark M.R."/>
            <person name="Robbie E."/>
            <person name="Sanchez C."/>
            <person name="Schoenfeld J."/>
            <person name="Seshagiri S."/>
            <person name="Simmons L."/>
            <person name="Singh J."/>
            <person name="Smith V."/>
            <person name="Stinson J."/>
            <person name="Vagts A."/>
            <person name="Vandlen R.L."/>
            <person name="Watanabe C."/>
            <person name="Wieand D."/>
            <person name="Woods K."/>
            <person name="Xie M.-H."/>
            <person name="Yansura D.G."/>
            <person name="Yi S."/>
            <person name="Yu G."/>
            <person name="Yuan J."/>
            <person name="Zhang M."/>
            <person name="Zhang Z."/>
            <person name="Goddard A.D."/>
            <person name="Wood W.I."/>
            <person name="Godowski P.J."/>
            <person name="Gray A.M."/>
        </authorList>
    </citation>
    <scope>NUCLEOTIDE SEQUENCE [LARGE SCALE MRNA]</scope>
</reference>
<protein>
    <recommendedName>
        <fullName>Putative uncharacterized protein UNQ9165/PRO28630</fullName>
    </recommendedName>
</protein>
<name>YS002_HUMAN</name>
<sequence>MAALSRALGPLRTPAPPLWIGLFLVATGSQQSLAQPLPGNTTEATPRSLRASGSLCGPHAKAPYLCEATHEPAAARIRAQVPDTRWSRVGGQRFYSRVLSPLHRGPSGHTEASAQRSHMGKLKEPQPQDHKPGLGAS</sequence>
<evidence type="ECO:0000255" key="1"/>
<evidence type="ECO:0000256" key="2">
    <source>
        <dbReference type="SAM" id="MobiDB-lite"/>
    </source>
</evidence>
<evidence type="ECO:0000305" key="3"/>